<reference key="1">
    <citation type="journal article" date="2002" name="J. Bacteriol.">
        <title>Molecular characterization of the PceA reductive dehalogenase of desulfitobacterium sp. strain Y51.</title>
        <authorList>
            <person name="Suyama A."/>
            <person name="Yamashita M."/>
            <person name="Yoshino S."/>
            <person name="Furukawa K."/>
        </authorList>
    </citation>
    <scope>NUCLEOTIDE SEQUENCE [GENOMIC DNA]</scope>
    <scope>PROTEIN SEQUENCE OF 40-59; 73-80; 85-92; 102-114; 273-279; 301-305 AND 400-410</scope>
    <scope>FUNCTION</scope>
    <scope>CATALYTIC ACTIVITY</scope>
    <scope>COFACTOR</scope>
    <scope>BIOPHYSICOCHEMICAL PROPERTIES</scope>
    <scope>SUBCELLULAR LOCATION</scope>
    <scope>INDUCTION</scope>
    <source>
        <strain>Y51</strain>
    </source>
</reference>
<reference key="2">
    <citation type="journal article" date="2006" name="Appl. Microbiol. Biotechnol.">
        <title>Emergence of two types of nondechlorinating variants in the tetrachloroethene-halorespiring Desulfitobacterium sp. strain Y51.</title>
        <authorList>
            <person name="Futagami T."/>
            <person name="Tsuboi Y."/>
            <person name="Suyama A."/>
            <person name="Goto M."/>
            <person name="Furukawa K."/>
        </authorList>
    </citation>
    <scope>NUCLEOTIDE SEQUENCE [GENOMIC DNA]</scope>
    <scope>OPERON STRUCTURE</scope>
    <source>
        <strain>Y51</strain>
    </source>
</reference>
<reference key="3">
    <citation type="journal article" date="2006" name="J. Bacteriol.">
        <title>Complete genome sequence of the dehalorespiring bacterium Desulfitobacterium hafniense Y51 and comparison with Dehalococcoides ethenogenes 195.</title>
        <authorList>
            <person name="Nonaka H."/>
            <person name="Keresztes G."/>
            <person name="Shinoda Y."/>
            <person name="Ikenaga Y."/>
            <person name="Abe M."/>
            <person name="Naito K."/>
            <person name="Inatomi K."/>
            <person name="Furukawa K."/>
            <person name="Inui M."/>
            <person name="Yukawa H."/>
        </authorList>
    </citation>
    <scope>NUCLEOTIDE SEQUENCE [LARGE SCALE GENOMIC DNA]</scope>
    <source>
        <strain>Y51</strain>
    </source>
</reference>
<reference key="4">
    <citation type="journal article" date="2006" name="Appl. Environ. Microbiol.">
        <title>Effects of chloromethanes on growth of and deletion of the pce gene cluster in dehalorespiring Desulfitobacterium hafniense strain Y51.</title>
        <authorList>
            <person name="Futagami T."/>
            <person name="Yamaguchi T."/>
            <person name="Nakayama S."/>
            <person name="Goto M."/>
            <person name="Furukawa K."/>
        </authorList>
    </citation>
    <scope>INDUCTION</scope>
    <scope>DISRUPTION PHENOTYPE</scope>
    <source>
        <strain>Y51</strain>
    </source>
</reference>
<reference key="5">
    <citation type="journal article" date="2012" name="Appl. Environ. Microbiol.">
        <title>Impact of vitamin B12 on formation of the tetrachloroethene reductive dehalogenase in Desulfitobacterium hafniense strain Y51.</title>
        <authorList>
            <person name="Reinhold A."/>
            <person name="Westermann M."/>
            <person name="Seifert J."/>
            <person name="von Bergen M."/>
            <person name="Schubert T."/>
            <person name="Diekert G."/>
        </authorList>
    </citation>
    <scope>COFACTOR</scope>
    <scope>ACTIVITY REGULATION</scope>
    <scope>SUBCELLULAR LOCATION</scope>
    <scope>INDUCTION</scope>
    <source>
        <strain>Y51</strain>
    </source>
</reference>
<reference key="6">
    <citation type="journal article" date="2014" name="Appl. Environ. Microbiol.">
        <title>Functional heterologous production of reductive dehalogenases from Desulfitobacterium hafniense strains.</title>
        <authorList>
            <person name="Mac Nelly A."/>
            <person name="Kai M."/>
            <person name="Svatos A."/>
            <person name="Diekert G."/>
            <person name="Schubert T."/>
        </authorList>
    </citation>
    <scope>FUNCTION</scope>
    <scope>CATALYTIC ACTIVITY</scope>
    <scope>ACTIVITY REGULATION</scope>
    <scope>EXPRESSION IN S.BLATTAE</scope>
    <source>
        <strain>Y51</strain>
    </source>
</reference>
<keyword id="KW-0004">4Fe-4S</keyword>
<keyword id="KW-1003">Cell membrane</keyword>
<keyword id="KW-0963">Cytoplasm</keyword>
<keyword id="KW-0903">Direct protein sequencing</keyword>
<keyword id="KW-0408">Iron</keyword>
<keyword id="KW-0411">Iron-sulfur</keyword>
<keyword id="KW-0472">Membrane</keyword>
<keyword id="KW-0479">Metal-binding</keyword>
<keyword id="KW-0560">Oxidoreductase</keyword>
<keyword id="KW-1185">Reference proteome</keyword>
<keyword id="KW-0677">Repeat</keyword>
<keyword id="KW-0964">Secreted</keyword>
<keyword id="KW-0732">Signal</keyword>
<evidence type="ECO:0000250" key="1">
    <source>
        <dbReference type="UniProtKB" id="O68252"/>
    </source>
</evidence>
<evidence type="ECO:0000255" key="2">
    <source>
        <dbReference type="PROSITE-ProRule" id="PRU00648"/>
    </source>
</evidence>
<evidence type="ECO:0000255" key="3">
    <source>
        <dbReference type="PROSITE-ProRule" id="PRU00711"/>
    </source>
</evidence>
<evidence type="ECO:0000269" key="4">
    <source>
    </source>
</evidence>
<evidence type="ECO:0000269" key="5">
    <source>
    </source>
</evidence>
<evidence type="ECO:0000269" key="6">
    <source>
    </source>
</evidence>
<evidence type="ECO:0000269" key="7">
    <source>
    </source>
</evidence>
<evidence type="ECO:0000269" key="8">
    <source>
    </source>
</evidence>
<evidence type="ECO:0000303" key="9">
    <source>
    </source>
</evidence>
<evidence type="ECO:0000303" key="10">
    <source>
    </source>
</evidence>
<evidence type="ECO:0000305" key="11"/>
<evidence type="ECO:0000312" key="12">
    <source>
        <dbReference type="EMBL" id="BAE84628.1"/>
    </source>
</evidence>
<comment type="function">
    <text evidence="4 8">Catalyzes the reductive dechlorination of tetrachloroethene (PCE) to trichloroethene (TCE) and of trichloroethene to cis-1,2-dichloroethene (DCE) (PubMed:12057934, PubMed:24814779). Can also use various chlorinated ethanes such as tetrachloroethane, pentachloroethane and hexachloroethane (PubMed:12057934). Reduced methyl viologen can act as the artificial electron donor (PubMed:12057934).</text>
</comment>
<comment type="catalytic activity">
    <reaction evidence="4 8">
        <text>trichloroethene + chloride + A + H(+) = tetrachloroethene + AH2</text>
        <dbReference type="Rhea" id="RHEA:20353"/>
        <dbReference type="ChEBI" id="CHEBI:13193"/>
        <dbReference type="ChEBI" id="CHEBI:15378"/>
        <dbReference type="ChEBI" id="CHEBI:16602"/>
        <dbReference type="ChEBI" id="CHEBI:17300"/>
        <dbReference type="ChEBI" id="CHEBI:17499"/>
        <dbReference type="ChEBI" id="CHEBI:17996"/>
        <dbReference type="EC" id="1.21.99.5"/>
    </reaction>
    <physiologicalReaction direction="right-to-left" evidence="4 8">
        <dbReference type="Rhea" id="RHEA:20355"/>
    </physiologicalReaction>
</comment>
<comment type="catalytic activity">
    <reaction evidence="4 8">
        <text>trichloroethene + AH2 = (Z)-1,2-dichloroethene + chloride + A + H(+)</text>
        <dbReference type="Rhea" id="RHEA:67992"/>
        <dbReference type="ChEBI" id="CHEBI:13193"/>
        <dbReference type="ChEBI" id="CHEBI:15378"/>
        <dbReference type="ChEBI" id="CHEBI:16602"/>
        <dbReference type="ChEBI" id="CHEBI:17499"/>
        <dbReference type="ChEBI" id="CHEBI:17996"/>
        <dbReference type="ChEBI" id="CHEBI:28805"/>
    </reaction>
    <physiologicalReaction direction="left-to-right" evidence="4 8">
        <dbReference type="Rhea" id="RHEA:67993"/>
    </physiologicalReaction>
</comment>
<comment type="cofactor">
    <cofactor evidence="1">
        <name>[4Fe-4S] cluster</name>
        <dbReference type="ChEBI" id="CHEBI:49883"/>
    </cofactor>
    <text evidence="1">Binds 2 [4Fe-4S] clusters.</text>
</comment>
<comment type="cofactor">
    <cofactor evidence="4 7">
        <name>corrinoid</name>
        <dbReference type="ChEBI" id="CHEBI:33913"/>
    </cofactor>
</comment>
<comment type="activity regulation">
    <text evidence="7 8">PceT is required as a chaperone for prePceA maturation (PubMed:22961902, PubMed:24814779). In the absence or presence of exogenous vitamin B12, the intracellular corrinoid level decreases in fumarate-grown cells and the PceA precursor forms catalytically inactive, corrinoid-free multiprotein aggregates (PubMed:22961902). Exogenous vitamin B12 is not incorporated into the PceA precursor, even though it affects the transposition of the pce gene cluster (PubMed:22961902).</text>
</comment>
<comment type="biophysicochemical properties">
    <kinetics>
        <KM evidence="4">105 uM for tetrachloroethene</KM>
        <KM evidence="4">535 uM for trichloroethene</KM>
        <KM evidence="4">125 uM for hexachloroethane</KM>
        <KM evidence="4">619 uM for pentachloroethane</KM>
        <KM evidence="4">336 uM for 1,1,2,2-tetrachloroethane</KM>
        <KM evidence="4">785 uM for 1,1,1,2-tetrachloroethane</KM>
        <Vmax evidence="4">164.0 nmol/min/mg enzyme with tetrachloroethene as substrate</Vmax>
        <Vmax evidence="4">811.0 nmol/min/mg enzyme with trichloroethene as substrate</Vmax>
        <Vmax evidence="4">148.0 nmol/min/mg enzyme with hexachloroethane as substrate</Vmax>
        <Vmax evidence="4">876.0 nmol/min/mg enzyme with pentachloroethane as substrate</Vmax>
        <Vmax evidence="4">42.0 nmol/min/mg enzyme with 1,1,2,2-tetrachloroethane as substrate</Vmax>
        <Vmax evidence="4">772.0 nmol/min/mg enzyme with 1,1,1,2-tetrachloroethane as substrate</Vmax>
    </kinetics>
    <phDependence>
        <text evidence="4">Optimum pH is 7.0-7.5.</text>
    </phDependence>
    <temperatureDependence>
        <text evidence="4">Optimum temperature is 37 degrees Celsius.</text>
    </temperatureDependence>
</comment>
<comment type="subcellular location">
    <subcellularLocation>
        <location evidence="7">Cytoplasm</location>
    </subcellularLocation>
    <subcellularLocation>
        <location evidence="7">Cell membrane</location>
    </subcellularLocation>
    <subcellularLocation>
        <location evidence="4 7">Secreted</location>
    </subcellularLocation>
    <text evidence="7">In the presence of PCE, the PceA cofactor-free precursor is formed and localizes in the cytoplasm (PubMed:22961902). After incorporation of the corrinoid cofactor and assembly and incorporation of the iron-sulfur clusters, the precursor protein is correctly folded and probably exported to the exoplasm via the TAT system (PubMed:22961902). In the absence of PCE, PceA is detected in large aggregates localized in the cytoplasm (PubMed:22961902).</text>
</comment>
<comment type="induction">
    <text evidence="4 5 6 7">Expression is highly induced in the presence of PCE and TCE (PubMed:12057934). Located in the pceABCT gene cluster that is flanked by insertion sequences including transposase genes (PubMed:16133337). PceA, pceB and pceC are cotranscribed (PubMed:16957221). PCE-depleted cells grown for several subcultivation steps on fumarate as an alternative electron acceptor lost the tetrachloroethene-reductive dehalogenase (PceA) activity by the transposition of the pce gene cluster (PubMed:22961902). Exogenous vitamin B12 hampers the transposition of the pce gene cluster (PubMed:22961902).</text>
</comment>
<comment type="PTM">
    <text evidence="2 4">Predicted to be exported by the Tat system. The position of the signal peptide cleavage has been experimentally proven.</text>
</comment>
<comment type="disruption phenotype">
    <text evidence="6">Chloroform inhibits the growth of the wild-type strain, but not the growth of the PCE-nondechlorinating small deletion (SD) and large deletion (LD) variants, where the former fails to transcribe the pceABC genes caused by a deletion of the promoter and the latter lost the entire pceABCT gene cluster.</text>
</comment>
<comment type="similarity">
    <text evidence="11">Belongs to the PceA family.</text>
</comment>
<dbReference type="EC" id="1.21.99.5" evidence="4 8"/>
<dbReference type="EMBL" id="AB070709">
    <property type="protein sequence ID" value="BAC00915.1"/>
    <property type="molecule type" value="Genomic_DNA"/>
</dbReference>
<dbReference type="EMBL" id="AY706985">
    <property type="protein sequence ID" value="AAW80323.1"/>
    <property type="molecule type" value="Genomic_DNA"/>
</dbReference>
<dbReference type="EMBL" id="AP008230">
    <property type="protein sequence ID" value="BAE84628.1"/>
    <property type="molecule type" value="Genomic_DNA"/>
</dbReference>
<dbReference type="RefSeq" id="WP_011460641.1">
    <property type="nucleotide sequence ID" value="NC_007907.1"/>
</dbReference>
<dbReference type="SMR" id="Q8L172"/>
<dbReference type="STRING" id="138119.DSY2839"/>
<dbReference type="KEGG" id="dsy:DSY2839"/>
<dbReference type="eggNOG" id="COG1600">
    <property type="taxonomic scope" value="Bacteria"/>
</dbReference>
<dbReference type="HOGENOM" id="CLU_036586_0_0_9"/>
<dbReference type="BioCyc" id="MetaCyc:MONOMER-5146"/>
<dbReference type="BRENDA" id="1.21.99.5">
    <property type="organism ID" value="1880"/>
</dbReference>
<dbReference type="Proteomes" id="UP000001946">
    <property type="component" value="Chromosome"/>
</dbReference>
<dbReference type="GO" id="GO:0005737">
    <property type="term" value="C:cytoplasm"/>
    <property type="evidence" value="ECO:0007669"/>
    <property type="project" value="UniProtKB-SubCell"/>
</dbReference>
<dbReference type="GO" id="GO:0005576">
    <property type="term" value="C:extracellular region"/>
    <property type="evidence" value="ECO:0007669"/>
    <property type="project" value="UniProtKB-SubCell"/>
</dbReference>
<dbReference type="GO" id="GO:0005886">
    <property type="term" value="C:plasma membrane"/>
    <property type="evidence" value="ECO:0007669"/>
    <property type="project" value="UniProtKB-SubCell"/>
</dbReference>
<dbReference type="GO" id="GO:0051539">
    <property type="term" value="F:4 iron, 4 sulfur cluster binding"/>
    <property type="evidence" value="ECO:0007669"/>
    <property type="project" value="UniProtKB-KW"/>
</dbReference>
<dbReference type="GO" id="GO:0046872">
    <property type="term" value="F:metal ion binding"/>
    <property type="evidence" value="ECO:0007669"/>
    <property type="project" value="UniProtKB-KW"/>
</dbReference>
<dbReference type="GO" id="GO:0016491">
    <property type="term" value="F:oxidoreductase activity"/>
    <property type="evidence" value="ECO:0007669"/>
    <property type="project" value="UniProtKB-KW"/>
</dbReference>
<dbReference type="Gene3D" id="3.30.70.20">
    <property type="match status" value="1"/>
</dbReference>
<dbReference type="InterPro" id="IPR017896">
    <property type="entry name" value="4Fe4S_Fe-S-bd"/>
</dbReference>
<dbReference type="InterPro" id="IPR017900">
    <property type="entry name" value="4Fe4S_Fe_S_CS"/>
</dbReference>
<dbReference type="InterPro" id="IPR012832">
    <property type="entry name" value="RDH"/>
</dbReference>
<dbReference type="InterPro" id="IPR006311">
    <property type="entry name" value="TAT_signal"/>
</dbReference>
<dbReference type="InterPro" id="IPR019546">
    <property type="entry name" value="TAT_signal_bac_arc"/>
</dbReference>
<dbReference type="NCBIfam" id="TIGR02486">
    <property type="entry name" value="RDH"/>
    <property type="match status" value="1"/>
</dbReference>
<dbReference type="NCBIfam" id="TIGR01409">
    <property type="entry name" value="TAT_signal_seq"/>
    <property type="match status" value="1"/>
</dbReference>
<dbReference type="PANTHER" id="PTHR42827:SF1">
    <property type="entry name" value="IRON-SULFUR CLUSTER-BINDING PROTEIN"/>
    <property type="match status" value="1"/>
</dbReference>
<dbReference type="PANTHER" id="PTHR42827">
    <property type="entry name" value="IRON-SULFUR CLUSTER-BINDING PROTEIN-RELATED"/>
    <property type="match status" value="1"/>
</dbReference>
<dbReference type="Pfam" id="PF13484">
    <property type="entry name" value="Fer4_16"/>
    <property type="match status" value="1"/>
</dbReference>
<dbReference type="Pfam" id="PF10518">
    <property type="entry name" value="TAT_signal"/>
    <property type="match status" value="1"/>
</dbReference>
<dbReference type="SUPFAM" id="SSF54862">
    <property type="entry name" value="4Fe-4S ferredoxins"/>
    <property type="match status" value="1"/>
</dbReference>
<dbReference type="PROSITE" id="PS00198">
    <property type="entry name" value="4FE4S_FER_1"/>
    <property type="match status" value="1"/>
</dbReference>
<dbReference type="PROSITE" id="PS51379">
    <property type="entry name" value="4FE4S_FER_2"/>
    <property type="match status" value="1"/>
</dbReference>
<dbReference type="PROSITE" id="PS51318">
    <property type="entry name" value="TAT"/>
    <property type="match status" value="1"/>
</dbReference>
<protein>
    <recommendedName>
        <fullName evidence="10">Tetrachloroethene reductive dehalogenase</fullName>
        <ecNumber evidence="4 8">1.21.99.5</ecNumber>
    </recommendedName>
    <alternativeName>
        <fullName evidence="9">PceA reductive dehalogenase</fullName>
    </alternativeName>
</protein>
<name>PCEA_DESHY</name>
<sequence>MGEINRRNFLKVSILGAAAAAVASASAVKGMVSPLVADAADIVAPITETSEFPYKVDAKYQRYNSLKNFFEKTFDPEANKTPIKFHYDDVSKITGKKDTGKDLPTLNAERLGIKGRPATHTETSILFHTQHLGAMLTQRHNETGWTGLDEALNAGAWAVEFDYSGFNATGGGPGSVIPLYPINPMTNEIANEPVMVPGLYNWDNIDVESVRQQGQQWKFESKEEASKIVKKATRLLGADLVGIAPYDERWTYSTWGRKIYKPCKMPNGRTKYLPWDLPKMLSGGGVEVFGHAKFEPDWEKYAGFKPKSVIVFVLEEDYEAIRTSPSVISSATVGKSYSNMAEVAYKIAVFLRKLGYYAAPCGNDTGISVPMAVQAGLGEAGRNGLLITQKFGPRHRIAKVYTDLELAPDKPRKFGVREFCRLCKKCADACPAQAISHEKDPKVLQPEDCEVAENPYTEKWHLDSNRCGSFWAYNGSPCSNCVAVCSWNKVETWNHDVARVATQIPLLQDAARKFDEWFGYNGPVNPDERLESGYVQNMVKDFWNNPESIKQ</sequence>
<accession>Q8L172</accession>
<gene>
    <name evidence="9" type="primary">pceA</name>
    <name evidence="12" type="ordered locus">DSY2839</name>
</gene>
<organism>
    <name type="scientific">Desulfitobacterium hafniense (strain Y51)</name>
    <dbReference type="NCBI Taxonomy" id="138119"/>
    <lineage>
        <taxon>Bacteria</taxon>
        <taxon>Bacillati</taxon>
        <taxon>Bacillota</taxon>
        <taxon>Clostridia</taxon>
        <taxon>Eubacteriales</taxon>
        <taxon>Desulfitobacteriaceae</taxon>
        <taxon>Desulfitobacterium</taxon>
    </lineage>
</organism>
<proteinExistence type="evidence at protein level"/>
<feature type="signal peptide" description="Tat-type signal" evidence="2 4">
    <location>
        <begin position="1"/>
        <end position="39"/>
    </location>
</feature>
<feature type="chain" id="PRO_5008973249" description="Tetrachloroethene reductive dehalogenase" evidence="4">
    <location>
        <begin position="40"/>
        <end position="551"/>
    </location>
</feature>
<feature type="domain" description="4Fe-4S ferredoxin-type 1" evidence="3">
    <location>
        <begin position="411"/>
        <end position="440"/>
    </location>
</feature>
<feature type="domain" description="4Fe-4S ferredoxin-type 2" evidence="11">
    <location>
        <begin position="478"/>
        <end position="496"/>
    </location>
</feature>
<feature type="binding site" evidence="1">
    <location>
        <position position="420"/>
    </location>
    <ligand>
        <name>[4Fe-4S] cluster</name>
        <dbReference type="ChEBI" id="CHEBI:49883"/>
        <label>1</label>
    </ligand>
</feature>
<feature type="binding site" evidence="1">
    <location>
        <position position="423"/>
    </location>
    <ligand>
        <name>[4Fe-4S] cluster</name>
        <dbReference type="ChEBI" id="CHEBI:49883"/>
        <label>1</label>
    </ligand>
</feature>
<feature type="binding site" evidence="1">
    <location>
        <position position="426"/>
    </location>
    <ligand>
        <name>[4Fe-4S] cluster</name>
        <dbReference type="ChEBI" id="CHEBI:49883"/>
        <label>1</label>
    </ligand>
</feature>
<feature type="binding site" evidence="1">
    <location>
        <position position="430"/>
    </location>
    <ligand>
        <name>[4Fe-4S] cluster</name>
        <dbReference type="ChEBI" id="CHEBI:49883"/>
        <label>2</label>
    </ligand>
</feature>
<feature type="binding site" evidence="1">
    <location>
        <position position="467"/>
    </location>
    <ligand>
        <name>[4Fe-4S] cluster</name>
        <dbReference type="ChEBI" id="CHEBI:49883"/>
        <label>2</label>
    </ligand>
</feature>
<feature type="binding site" evidence="1">
    <location>
        <position position="478"/>
    </location>
    <ligand>
        <name>[4Fe-4S] cluster</name>
        <dbReference type="ChEBI" id="CHEBI:49883"/>
        <label>2</label>
    </ligand>
</feature>
<feature type="binding site" evidence="1">
    <location>
        <position position="481"/>
    </location>
    <ligand>
        <name>[4Fe-4S] cluster</name>
        <dbReference type="ChEBI" id="CHEBI:49883"/>
        <label>2</label>
    </ligand>
</feature>
<feature type="binding site" evidence="1">
    <location>
        <position position="485"/>
    </location>
    <ligand>
        <name>[4Fe-4S] cluster</name>
        <dbReference type="ChEBI" id="CHEBI:49883"/>
        <label>1</label>
    </ligand>
</feature>